<name>NEU2_STRCA</name>
<accession>P21916</accession>
<evidence type="ECO:0000250" key="1">
    <source>
        <dbReference type="UniProtKB" id="P01175"/>
    </source>
</evidence>
<evidence type="ECO:0000305" key="2"/>
<dbReference type="PIR" id="A30978">
    <property type="entry name" value="A30978"/>
</dbReference>
<dbReference type="SMR" id="P21916"/>
<dbReference type="GO" id="GO:0005615">
    <property type="term" value="C:extracellular space"/>
    <property type="evidence" value="ECO:0007669"/>
    <property type="project" value="TreeGrafter"/>
</dbReference>
<dbReference type="GO" id="GO:0030141">
    <property type="term" value="C:secretory granule"/>
    <property type="evidence" value="ECO:0007669"/>
    <property type="project" value="TreeGrafter"/>
</dbReference>
<dbReference type="GO" id="GO:0005185">
    <property type="term" value="F:neurohypophyseal hormone activity"/>
    <property type="evidence" value="ECO:0007669"/>
    <property type="project" value="InterPro"/>
</dbReference>
<dbReference type="FunFam" id="2.60.9.10:FF:000001">
    <property type="entry name" value="oxytocin-neurophysin 1"/>
    <property type="match status" value="1"/>
</dbReference>
<dbReference type="Gene3D" id="2.60.9.10">
    <property type="entry name" value="Neurohypophysial hormone domain"/>
    <property type="match status" value="1"/>
</dbReference>
<dbReference type="InterPro" id="IPR000981">
    <property type="entry name" value="Neurhyp_horm"/>
</dbReference>
<dbReference type="InterPro" id="IPR036387">
    <property type="entry name" value="Neurhyp_horm_dom_sf"/>
</dbReference>
<dbReference type="PANTHER" id="PTHR11681">
    <property type="entry name" value="NEUROPHYSIN"/>
    <property type="match status" value="1"/>
</dbReference>
<dbReference type="PANTHER" id="PTHR11681:SF15">
    <property type="entry name" value="VASOTOCIN-NEUROPHYSIN VT"/>
    <property type="match status" value="1"/>
</dbReference>
<dbReference type="Pfam" id="PF00184">
    <property type="entry name" value="Hormone_5"/>
    <property type="match status" value="1"/>
</dbReference>
<dbReference type="PIRSF" id="PIRSF001815">
    <property type="entry name" value="Nonapeptide_hormone_precursor"/>
    <property type="match status" value="1"/>
</dbReference>
<dbReference type="PRINTS" id="PR00831">
    <property type="entry name" value="NEUROPHYSIN"/>
</dbReference>
<dbReference type="SMART" id="SM00003">
    <property type="entry name" value="NH"/>
    <property type="match status" value="1"/>
</dbReference>
<dbReference type="SUPFAM" id="SSF49606">
    <property type="entry name" value="Neurophysin II"/>
    <property type="match status" value="1"/>
</dbReference>
<keyword id="KW-0165">Cleavage on pair of basic residues</keyword>
<keyword id="KW-0903">Direct protein sequencing</keyword>
<keyword id="KW-1015">Disulfide bond</keyword>
<keyword id="KW-0964">Secreted</keyword>
<organism>
    <name type="scientific">Struthio camelus</name>
    <name type="common">Common ostrich</name>
    <dbReference type="NCBI Taxonomy" id="8801"/>
    <lineage>
        <taxon>Eukaryota</taxon>
        <taxon>Metazoa</taxon>
        <taxon>Chordata</taxon>
        <taxon>Craniata</taxon>
        <taxon>Vertebrata</taxon>
        <taxon>Euteleostomi</taxon>
        <taxon>Archelosauria</taxon>
        <taxon>Archosauria</taxon>
        <taxon>Dinosauria</taxon>
        <taxon>Saurischia</taxon>
        <taxon>Theropoda</taxon>
        <taxon>Coelurosauria</taxon>
        <taxon>Aves</taxon>
        <taxon>Palaeognathae</taxon>
        <taxon>Struthioniformes</taxon>
        <taxon>Struthionidae</taxon>
        <taxon>Struthio</taxon>
    </lineage>
</organism>
<comment type="function">
    <text>Neurophysin 2 specifically binds vasopressin.</text>
</comment>
<comment type="subcellular location">
    <subcellularLocation>
        <location>Secreted</location>
    </subcellularLocation>
</comment>
<comment type="similarity">
    <text evidence="2">Belongs to the vasopressin/oxytocin family.</text>
</comment>
<proteinExistence type="evidence at protein level"/>
<sequence length="132" mass="13363">ALADAALRQCMPCGPGDRGNCFGPSICCGAELGCYVGTAETLRCAEENYLPSPCRAGGQPCGAGGRCAAPGICCSDETCSLEPACLEEAGERGGEPAQKNLTGLDASAGDFLLKLMHLAANRQQQGGKGPLL</sequence>
<protein>
    <recommendedName>
        <fullName>Neurophysin 2</fullName>
    </recommendedName>
    <alternativeName>
        <fullName>MSEL-neurophysin</fullName>
    </alternativeName>
</protein>
<feature type="chain" id="PRO_0000160939" description="Neurophysin 2">
    <location>
        <begin position="1"/>
        <end position="132"/>
    </location>
</feature>
<feature type="disulfide bond" evidence="1">
    <location>
        <begin position="10"/>
        <end position="54"/>
    </location>
</feature>
<feature type="disulfide bond" evidence="1">
    <location>
        <begin position="13"/>
        <end position="27"/>
    </location>
</feature>
<feature type="disulfide bond" evidence="1">
    <location>
        <begin position="21"/>
        <end position="44"/>
    </location>
</feature>
<feature type="disulfide bond" evidence="1">
    <location>
        <begin position="28"/>
        <end position="34"/>
    </location>
</feature>
<feature type="disulfide bond" evidence="1">
    <location>
        <begin position="61"/>
        <end position="73"/>
    </location>
</feature>
<feature type="disulfide bond" evidence="1">
    <location>
        <begin position="67"/>
        <end position="85"/>
    </location>
</feature>
<feature type="disulfide bond" evidence="1">
    <location>
        <begin position="74"/>
        <end position="79"/>
    </location>
</feature>
<reference key="1">
    <citation type="journal article" date="1989" name="Int. J. Pept. Protein Res.">
        <title>Ostrich MSEL-neurophysin belongs to the class of two-domain 'big' neurophysin as indicated by complete amino acid sequence of the neurophysin/copeptin.</title>
        <authorList>
            <person name="Lazure C."/>
            <person name="Saayman H.S."/>
            <person name="Naude R.J."/>
            <person name="Oelofsen W."/>
            <person name="Chretien M."/>
        </authorList>
    </citation>
    <scope>PROTEIN SEQUENCE</scope>
</reference>